<proteinExistence type="inferred from homology"/>
<reference key="1">
    <citation type="journal article" date="2008" name="Genome Res.">
        <title>Comparative genome analysis of Salmonella enteritidis PT4 and Salmonella gallinarum 287/91 provides insights into evolutionary and host adaptation pathways.</title>
        <authorList>
            <person name="Thomson N.R."/>
            <person name="Clayton D.J."/>
            <person name="Windhorst D."/>
            <person name="Vernikos G."/>
            <person name="Davidson S."/>
            <person name="Churcher C."/>
            <person name="Quail M.A."/>
            <person name="Stevens M."/>
            <person name="Jones M.A."/>
            <person name="Watson M."/>
            <person name="Barron A."/>
            <person name="Layton A."/>
            <person name="Pickard D."/>
            <person name="Kingsley R.A."/>
            <person name="Bignell A."/>
            <person name="Clark L."/>
            <person name="Harris B."/>
            <person name="Ormond D."/>
            <person name="Abdellah Z."/>
            <person name="Brooks K."/>
            <person name="Cherevach I."/>
            <person name="Chillingworth T."/>
            <person name="Woodward J."/>
            <person name="Norberczak H."/>
            <person name="Lord A."/>
            <person name="Arrowsmith C."/>
            <person name="Jagels K."/>
            <person name="Moule S."/>
            <person name="Mungall K."/>
            <person name="Saunders M."/>
            <person name="Whitehead S."/>
            <person name="Chabalgoity J.A."/>
            <person name="Maskell D."/>
            <person name="Humphreys T."/>
            <person name="Roberts M."/>
            <person name="Barrow P.A."/>
            <person name="Dougan G."/>
            <person name="Parkhill J."/>
        </authorList>
    </citation>
    <scope>NUCLEOTIDE SEQUENCE [LARGE SCALE GENOMIC DNA]</scope>
    <source>
        <strain>P125109</strain>
    </source>
</reference>
<gene>
    <name evidence="1" type="primary">rpsD</name>
    <name type="ordered locus">SEN3244</name>
</gene>
<comment type="function">
    <text evidence="1">One of the primary rRNA binding proteins, it binds directly to 16S rRNA where it nucleates assembly of the body of the 30S subunit.</text>
</comment>
<comment type="function">
    <text evidence="1">With S5 and S12 plays an important role in translational accuracy.</text>
</comment>
<comment type="subunit">
    <text evidence="1">Part of the 30S ribosomal subunit. Contacts protein S5. The interaction surface between S4 and S5 is involved in control of translational fidelity.</text>
</comment>
<comment type="similarity">
    <text evidence="1">Belongs to the universal ribosomal protein uS4 family.</text>
</comment>
<feature type="chain" id="PRO_1000140786" description="Small ribosomal subunit protein uS4">
    <location>
        <begin position="1"/>
        <end position="206"/>
    </location>
</feature>
<feature type="domain" description="S4 RNA-binding" evidence="1">
    <location>
        <begin position="96"/>
        <end position="156"/>
    </location>
</feature>
<dbReference type="EMBL" id="AM933172">
    <property type="protein sequence ID" value="CAR34819.1"/>
    <property type="molecule type" value="Genomic_DNA"/>
</dbReference>
<dbReference type="RefSeq" id="WP_000135226.1">
    <property type="nucleotide sequence ID" value="NC_011294.1"/>
</dbReference>
<dbReference type="SMR" id="B5R1F3"/>
<dbReference type="GeneID" id="93035755"/>
<dbReference type="KEGG" id="set:SEN3244"/>
<dbReference type="HOGENOM" id="CLU_092403_0_2_6"/>
<dbReference type="Proteomes" id="UP000000613">
    <property type="component" value="Chromosome"/>
</dbReference>
<dbReference type="GO" id="GO:0015935">
    <property type="term" value="C:small ribosomal subunit"/>
    <property type="evidence" value="ECO:0007669"/>
    <property type="project" value="InterPro"/>
</dbReference>
<dbReference type="GO" id="GO:0019843">
    <property type="term" value="F:rRNA binding"/>
    <property type="evidence" value="ECO:0007669"/>
    <property type="project" value="UniProtKB-UniRule"/>
</dbReference>
<dbReference type="GO" id="GO:0003735">
    <property type="term" value="F:structural constituent of ribosome"/>
    <property type="evidence" value="ECO:0007669"/>
    <property type="project" value="InterPro"/>
</dbReference>
<dbReference type="GO" id="GO:0042274">
    <property type="term" value="P:ribosomal small subunit biogenesis"/>
    <property type="evidence" value="ECO:0007669"/>
    <property type="project" value="TreeGrafter"/>
</dbReference>
<dbReference type="GO" id="GO:0006412">
    <property type="term" value="P:translation"/>
    <property type="evidence" value="ECO:0007669"/>
    <property type="project" value="UniProtKB-UniRule"/>
</dbReference>
<dbReference type="CDD" id="cd00165">
    <property type="entry name" value="S4"/>
    <property type="match status" value="1"/>
</dbReference>
<dbReference type="FunFam" id="1.10.1050.10:FF:000001">
    <property type="entry name" value="30S ribosomal protein S4"/>
    <property type="match status" value="1"/>
</dbReference>
<dbReference type="FunFam" id="3.10.290.10:FF:000001">
    <property type="entry name" value="30S ribosomal protein S4"/>
    <property type="match status" value="1"/>
</dbReference>
<dbReference type="Gene3D" id="1.10.1050.10">
    <property type="entry name" value="Ribosomal Protein S4 Delta 41, Chain A, domain 1"/>
    <property type="match status" value="1"/>
</dbReference>
<dbReference type="Gene3D" id="3.10.290.10">
    <property type="entry name" value="RNA-binding S4 domain"/>
    <property type="match status" value="1"/>
</dbReference>
<dbReference type="HAMAP" id="MF_01306_B">
    <property type="entry name" value="Ribosomal_uS4_B"/>
    <property type="match status" value="1"/>
</dbReference>
<dbReference type="InterPro" id="IPR022801">
    <property type="entry name" value="Ribosomal_uS4"/>
</dbReference>
<dbReference type="InterPro" id="IPR005709">
    <property type="entry name" value="Ribosomal_uS4_bac-type"/>
</dbReference>
<dbReference type="InterPro" id="IPR018079">
    <property type="entry name" value="Ribosomal_uS4_CS"/>
</dbReference>
<dbReference type="InterPro" id="IPR001912">
    <property type="entry name" value="Ribosomal_uS4_N"/>
</dbReference>
<dbReference type="InterPro" id="IPR002942">
    <property type="entry name" value="S4_RNA-bd"/>
</dbReference>
<dbReference type="InterPro" id="IPR036986">
    <property type="entry name" value="S4_RNA-bd_sf"/>
</dbReference>
<dbReference type="NCBIfam" id="NF003717">
    <property type="entry name" value="PRK05327.1"/>
    <property type="match status" value="1"/>
</dbReference>
<dbReference type="NCBIfam" id="TIGR01017">
    <property type="entry name" value="rpsD_bact"/>
    <property type="match status" value="1"/>
</dbReference>
<dbReference type="PANTHER" id="PTHR11831">
    <property type="entry name" value="30S 40S RIBOSOMAL PROTEIN"/>
    <property type="match status" value="1"/>
</dbReference>
<dbReference type="PANTHER" id="PTHR11831:SF4">
    <property type="entry name" value="SMALL RIBOSOMAL SUBUNIT PROTEIN US4M"/>
    <property type="match status" value="1"/>
</dbReference>
<dbReference type="Pfam" id="PF00163">
    <property type="entry name" value="Ribosomal_S4"/>
    <property type="match status" value="1"/>
</dbReference>
<dbReference type="Pfam" id="PF01479">
    <property type="entry name" value="S4"/>
    <property type="match status" value="1"/>
</dbReference>
<dbReference type="SMART" id="SM01390">
    <property type="entry name" value="Ribosomal_S4"/>
    <property type="match status" value="1"/>
</dbReference>
<dbReference type="SMART" id="SM00363">
    <property type="entry name" value="S4"/>
    <property type="match status" value="1"/>
</dbReference>
<dbReference type="SUPFAM" id="SSF55174">
    <property type="entry name" value="Alpha-L RNA-binding motif"/>
    <property type="match status" value="1"/>
</dbReference>
<dbReference type="PROSITE" id="PS00632">
    <property type="entry name" value="RIBOSOMAL_S4"/>
    <property type="match status" value="1"/>
</dbReference>
<dbReference type="PROSITE" id="PS50889">
    <property type="entry name" value="S4"/>
    <property type="match status" value="1"/>
</dbReference>
<sequence length="206" mass="23485">MARYLGPKLKLSRREGTDLFLKSGVRAIDTKCKIEQAPGQHGARKPRLSDYGVQLREKQKVRRIYGVLERQFRNYYKEAARLKGNTGENLLALLEGRLDNVVYRMGFGATRAEARQLVSHKAIMVNGRVVNIASYQVSPNDVVSIREKAKKQSRVKAALELAEQREKPTWLEVDAGKMEGTYKRKPERSDLSADINEHLIVELYSK</sequence>
<name>RS4_SALEP</name>
<evidence type="ECO:0000255" key="1">
    <source>
        <dbReference type="HAMAP-Rule" id="MF_01306"/>
    </source>
</evidence>
<evidence type="ECO:0000305" key="2"/>
<protein>
    <recommendedName>
        <fullName evidence="1">Small ribosomal subunit protein uS4</fullName>
    </recommendedName>
    <alternativeName>
        <fullName evidence="2">30S ribosomal protein S4</fullName>
    </alternativeName>
</protein>
<organism>
    <name type="scientific">Salmonella enteritidis PT4 (strain P125109)</name>
    <dbReference type="NCBI Taxonomy" id="550537"/>
    <lineage>
        <taxon>Bacteria</taxon>
        <taxon>Pseudomonadati</taxon>
        <taxon>Pseudomonadota</taxon>
        <taxon>Gammaproteobacteria</taxon>
        <taxon>Enterobacterales</taxon>
        <taxon>Enterobacteriaceae</taxon>
        <taxon>Salmonella</taxon>
    </lineage>
</organism>
<accession>B5R1F3</accession>
<keyword id="KW-0687">Ribonucleoprotein</keyword>
<keyword id="KW-0689">Ribosomal protein</keyword>
<keyword id="KW-0694">RNA-binding</keyword>
<keyword id="KW-0699">rRNA-binding</keyword>